<gene>
    <name evidence="2" type="primary">PSBO</name>
</gene>
<keyword id="KW-0150">Chloroplast</keyword>
<keyword id="KW-0903">Direct protein sequencing</keyword>
<keyword id="KW-0464">Manganese</keyword>
<keyword id="KW-0472">Membrane</keyword>
<keyword id="KW-0602">Photosynthesis</keyword>
<keyword id="KW-0604">Photosystem II</keyword>
<keyword id="KW-0934">Plastid</keyword>
<keyword id="KW-0793">Thylakoid</keyword>
<sequence>DGIDYAAVTVQLPGGERGGSTGYDNAVALPAGGRGSSMLDPKELGQMNIVFEGVSKSYHDAVALVLPSLKASTYYEESLYKVINTWADIINRALTEAVAAEAAAAEDPEMETMYTK</sequence>
<name>PSBO_PINST</name>
<proteinExistence type="evidence at protein level"/>
<evidence type="ECO:0000250" key="1">
    <source>
        <dbReference type="UniProtKB" id="P23321"/>
    </source>
</evidence>
<evidence type="ECO:0000250" key="2">
    <source>
        <dbReference type="UniProtKB" id="P26320"/>
    </source>
</evidence>
<evidence type="ECO:0000269" key="3">
    <source>
    </source>
</evidence>
<evidence type="ECO:0000303" key="4">
    <source>
    </source>
</evidence>
<evidence type="ECO:0000305" key="5"/>
<evidence type="ECO:0000305" key="6">
    <source>
    </source>
</evidence>
<organism>
    <name type="scientific">Pinus strobus</name>
    <name type="common">Eastern white pine</name>
    <dbReference type="NCBI Taxonomy" id="3348"/>
    <lineage>
        <taxon>Eukaryota</taxon>
        <taxon>Viridiplantae</taxon>
        <taxon>Streptophyta</taxon>
        <taxon>Embryophyta</taxon>
        <taxon>Tracheophyta</taxon>
        <taxon>Spermatophyta</taxon>
        <taxon>Pinopsida</taxon>
        <taxon>Pinidae</taxon>
        <taxon>Conifers I</taxon>
        <taxon>Pinales</taxon>
        <taxon>Pinaceae</taxon>
        <taxon>Pinus</taxon>
        <taxon>Pinus subgen. Strobus</taxon>
    </lineage>
</organism>
<accession>P84718</accession>
<protein>
    <recommendedName>
        <fullName>Putative oxygen-evolving enhancer protein 1</fullName>
        <shortName>OEE1</shortName>
    </recommendedName>
    <alternativeName>
        <fullName>33 kDa subunit of oxygen evolving system of photosystem II</fullName>
    </alternativeName>
    <alternativeName>
        <fullName>33 kDa thylakoid membrane protein</fullName>
    </alternativeName>
    <alternativeName>
        <fullName>OEC 33 kDa subunit</fullName>
    </alternativeName>
    <alternativeName>
        <fullName>PS2</fullName>
    </alternativeName>
</protein>
<feature type="chain" id="PRO_0000240623" description="Putative oxygen-evolving enhancer protein 1">
    <location>
        <begin position="1" status="less than"/>
        <end position="116" status="greater than"/>
    </location>
</feature>
<feature type="non-consecutive residues" evidence="4">
    <location>
        <begin position="17"/>
        <end position="18"/>
    </location>
</feature>
<feature type="non-consecutive residues" evidence="4">
    <location>
        <begin position="34"/>
        <end position="35"/>
    </location>
</feature>
<feature type="non-consecutive residues" evidence="4">
    <location>
        <begin position="42"/>
        <end position="43"/>
    </location>
</feature>
<feature type="non-consecutive residues" evidence="4">
    <location>
        <begin position="60"/>
        <end position="61"/>
    </location>
</feature>
<feature type="non-consecutive residues" evidence="4">
    <location>
        <begin position="70"/>
        <end position="71"/>
    </location>
</feature>
<feature type="non-consecutive residues" evidence="4">
    <location>
        <begin position="81"/>
        <end position="82"/>
    </location>
</feature>
<feature type="non-consecutive residues" evidence="4">
    <location>
        <begin position="92"/>
        <end position="93"/>
    </location>
</feature>
<feature type="non-consecutive residues" evidence="4">
    <location>
        <begin position="103"/>
        <end position="104"/>
    </location>
</feature>
<feature type="non-terminal residue" evidence="4">
    <location>
        <position position="1"/>
    </location>
</feature>
<feature type="non-terminal residue" evidence="4">
    <location>
        <position position="116"/>
    </location>
</feature>
<comment type="function">
    <text evidence="1">Stabilizes the manganese cluster which is the primary site of water splitting.</text>
</comment>
<comment type="subcellular location">
    <subcellularLocation>
        <location>Plastid</location>
        <location>Chloroplast thylakoid membrane</location>
    </subcellularLocation>
    <text>Associated with the photosystem II complex.</text>
</comment>
<comment type="miscellaneous">
    <text evidence="3">On the 2D-gel the determined pI of this protein is: 5.7, its MW is: 35.1 kDa.</text>
</comment>
<comment type="similarity">
    <text evidence="5">Belongs to the PsbO family.</text>
</comment>
<comment type="caution">
    <text evidence="3">The order of the peptides shown is unknown.</text>
</comment>
<comment type="caution">
    <text evidence="6">This sequence was originally thought to contain an additional peptide (PubMed:16529377). However, it was later shown that the peptide is likely to be human type II keratin, a common contaminant in proteomic analyses, so it has been removed and the remaining sequence may also contain further contaminations (PubMed:23895828).</text>
</comment>
<dbReference type="GO" id="GO:0009535">
    <property type="term" value="C:chloroplast thylakoid membrane"/>
    <property type="evidence" value="ECO:0007669"/>
    <property type="project" value="UniProtKB-SubCell"/>
</dbReference>
<dbReference type="GO" id="GO:0009654">
    <property type="term" value="C:photosystem II oxygen evolving complex"/>
    <property type="evidence" value="ECO:0007669"/>
    <property type="project" value="InterPro"/>
</dbReference>
<dbReference type="GO" id="GO:0010242">
    <property type="term" value="F:oxygen evolving activity"/>
    <property type="evidence" value="ECO:0007669"/>
    <property type="project" value="InterPro"/>
</dbReference>
<dbReference type="GO" id="GO:0010207">
    <property type="term" value="P:photosystem II assembly"/>
    <property type="evidence" value="ECO:0007669"/>
    <property type="project" value="InterPro"/>
</dbReference>
<dbReference type="GO" id="GO:0042549">
    <property type="term" value="P:photosystem II stabilization"/>
    <property type="evidence" value="ECO:0007669"/>
    <property type="project" value="InterPro"/>
</dbReference>
<dbReference type="Gene3D" id="3.30.2050.10">
    <property type="entry name" value="photosynthetic oxygen evolving center domain"/>
    <property type="match status" value="1"/>
</dbReference>
<dbReference type="InterPro" id="IPR011250">
    <property type="entry name" value="OMP/PagP_b-brl"/>
</dbReference>
<dbReference type="InterPro" id="IPR002628">
    <property type="entry name" value="PsbO"/>
</dbReference>
<dbReference type="PANTHER" id="PTHR34058">
    <property type="entry name" value="OXYGEN-EVOLVING ENHANCER PROTEIN 1-2, CHLOROPLASTIC"/>
    <property type="match status" value="1"/>
</dbReference>
<dbReference type="SUPFAM" id="SSF56925">
    <property type="entry name" value="OMPA-like"/>
    <property type="match status" value="1"/>
</dbReference>
<reference evidence="5" key="1">
    <citation type="journal article" date="2006" name="Mol. Plant Microbe Interact.">
        <title>Proteomic comparison of needles from blister rust-resistant and susceptible Pinus strobus seedlings reveals upregulation of putative disease resistance proteins.</title>
        <authorList>
            <person name="Smith J.A."/>
            <person name="Blanchette R.A."/>
            <person name="Burnes T.A."/>
            <person name="Jacobs J.J."/>
            <person name="Higgins L."/>
            <person name="Witthuhn B.A."/>
            <person name="David A.J."/>
            <person name="Gillman J.H."/>
        </authorList>
    </citation>
    <scope>PROTEIN SEQUENCE</scope>
    <source>
        <tissue evidence="3">Leaf</tissue>
    </source>
</reference>
<reference key="2">
    <citation type="journal article" date="2013" name="J. Proteomics">
        <title>Incorrectly annotated keratin derived peptide sequences lead to misleading MS/MS data interpretation.</title>
        <authorList>
            <person name="Nawrot R."/>
            <person name="Barylski J."/>
            <person name="Schulze W.X."/>
        </authorList>
    </citation>
    <scope>CONTAMINATING SEQUENCE</scope>
</reference>